<comment type="function">
    <text>Probable b-type cytochrome.</text>
</comment>
<comment type="subcellular location">
    <subcellularLocation>
        <location>Cell membrane</location>
        <topology>Multi-pass membrane protein</topology>
    </subcellularLocation>
</comment>
<comment type="similarity">
    <text evidence="2">Belongs to the HupC/HyaC/HydC family.</text>
</comment>
<organism>
    <name type="scientific">Rhodobacter capsulatus</name>
    <name type="common">Rhodopseudomonas capsulata</name>
    <dbReference type="NCBI Taxonomy" id="1061"/>
    <lineage>
        <taxon>Bacteria</taxon>
        <taxon>Pseudomonadati</taxon>
        <taxon>Pseudomonadota</taxon>
        <taxon>Alphaproteobacteria</taxon>
        <taxon>Rhodobacterales</taxon>
        <taxon>Rhodobacter group</taxon>
        <taxon>Rhodobacter</taxon>
    </lineage>
</organism>
<name>CYBH_RHOCA</name>
<keyword id="KW-1003">Cell membrane</keyword>
<keyword id="KW-0249">Electron transport</keyword>
<keyword id="KW-0349">Heme</keyword>
<keyword id="KW-0408">Iron</keyword>
<keyword id="KW-0472">Membrane</keyword>
<keyword id="KW-0479">Metal-binding</keyword>
<keyword id="KW-0812">Transmembrane</keyword>
<keyword id="KW-1133">Transmembrane helix</keyword>
<keyword id="KW-0813">Transport</keyword>
<reference key="1">
    <citation type="journal article" date="1990" name="FEMS Microbiol. Rev.">
        <title>Molecular biology studies of the uptake hydrogenase of Rhodobacter capsulatus and Rhodocyclus gelatinosus.</title>
        <authorList>
            <person name="Richaud P."/>
            <person name="Vignais P.M."/>
            <person name="Colbeau A."/>
            <person name="Uffen R.L."/>
            <person name="Cauvin B."/>
        </authorList>
    </citation>
    <scope>NUCLEOTIDE SEQUENCE [GENOMIC DNA]</scope>
    <source>
        <strain>ATCC 33303 / B10</strain>
    </source>
</reference>
<reference key="2">
    <citation type="journal article" date="1988" name="Mol. Gen. Genet.">
        <title>Cloning and sequencing of the genes encoding the large and the small subunits of the H2 uptake hydrogenase (hup) of Rhodobacter capsulatus.</title>
        <authorList>
            <person name="Leclerc M."/>
            <person name="Colbeau A."/>
            <person name="Cauvin B."/>
            <person name="Vignais P.M."/>
        </authorList>
    </citation>
    <scope>NUCLEOTIDE SEQUENCE [GENOMIC DNA] OF 1-48</scope>
    <source>
        <strain>ATCC 33303 / B10</strain>
    </source>
</reference>
<reference key="3">
    <citation type="journal article" date="1991" name="Mol. Microbiol.">
        <title>The hydrogenase structural operon in Rhodobacter capsulatus contains a third gene, hupM, necessary for the formation of a physiologically competent hydrogenase.</title>
        <authorList>
            <person name="Cauvin B."/>
            <person name="Colbeau A."/>
            <person name="Vignais P.M."/>
        </authorList>
    </citation>
    <scope>CHARACTERIZATION</scope>
</reference>
<evidence type="ECO:0000255" key="1"/>
<evidence type="ECO:0000305" key="2"/>
<protein>
    <recommendedName>
        <fullName>Probable Ni/Fe-hydrogenase B-type cytochrome subunit</fullName>
    </recommendedName>
</protein>
<gene>
    <name type="primary">hupC</name>
    <name type="synonym">hupM</name>
</gene>
<proteinExistence type="evidence at protein level"/>
<dbReference type="EMBL" id="X13520">
    <property type="protein sequence ID" value="CAA31871.1"/>
    <property type="molecule type" value="Genomic_DNA"/>
</dbReference>
<dbReference type="SMR" id="P16145"/>
<dbReference type="GO" id="GO:0005886">
    <property type="term" value="C:plasma membrane"/>
    <property type="evidence" value="ECO:0007669"/>
    <property type="project" value="UniProtKB-SubCell"/>
</dbReference>
<dbReference type="GO" id="GO:0009055">
    <property type="term" value="F:electron transfer activity"/>
    <property type="evidence" value="ECO:0007669"/>
    <property type="project" value="InterPro"/>
</dbReference>
<dbReference type="GO" id="GO:0020037">
    <property type="term" value="F:heme binding"/>
    <property type="evidence" value="ECO:0007669"/>
    <property type="project" value="TreeGrafter"/>
</dbReference>
<dbReference type="GO" id="GO:0005506">
    <property type="term" value="F:iron ion binding"/>
    <property type="evidence" value="ECO:0007669"/>
    <property type="project" value="InterPro"/>
</dbReference>
<dbReference type="GO" id="GO:0022904">
    <property type="term" value="P:respiratory electron transport chain"/>
    <property type="evidence" value="ECO:0007669"/>
    <property type="project" value="InterPro"/>
</dbReference>
<dbReference type="FunFam" id="1.20.950.20:FF:000003">
    <property type="entry name" value="Ni/Fe-hydrogenase 1 b-type cytochrome subunit"/>
    <property type="match status" value="1"/>
</dbReference>
<dbReference type="Gene3D" id="1.20.950.20">
    <property type="entry name" value="Transmembrane di-heme cytochromes, Chain C"/>
    <property type="match status" value="1"/>
</dbReference>
<dbReference type="InterPro" id="IPR011577">
    <property type="entry name" value="Cyt_b561_bac/Ni-Hgenase"/>
</dbReference>
<dbReference type="InterPro" id="IPR016174">
    <property type="entry name" value="Di-haem_cyt_TM"/>
</dbReference>
<dbReference type="InterPro" id="IPR051542">
    <property type="entry name" value="Hydrogenase_cytochrome"/>
</dbReference>
<dbReference type="InterPro" id="IPR000516">
    <property type="entry name" value="Ni-dep_Hydgase_cyt-B"/>
</dbReference>
<dbReference type="NCBIfam" id="TIGR02125">
    <property type="entry name" value="CytB-hydogenase"/>
    <property type="match status" value="1"/>
</dbReference>
<dbReference type="PANTHER" id="PTHR30485">
    <property type="entry name" value="NI/FE-HYDROGENASE 1 B-TYPE CYTOCHROME SUBUNIT"/>
    <property type="match status" value="1"/>
</dbReference>
<dbReference type="PANTHER" id="PTHR30485:SF0">
    <property type="entry name" value="NI_FE-HYDROGENASE 1 B-TYPE CYTOCHROME SUBUNIT-RELATED"/>
    <property type="match status" value="1"/>
</dbReference>
<dbReference type="Pfam" id="PF01292">
    <property type="entry name" value="Ni_hydr_CYTB"/>
    <property type="match status" value="1"/>
</dbReference>
<dbReference type="PRINTS" id="PR00161">
    <property type="entry name" value="NIHGNASECYTB"/>
</dbReference>
<dbReference type="SUPFAM" id="SSF81342">
    <property type="entry name" value="Transmembrane di-heme cytochromes"/>
    <property type="match status" value="1"/>
</dbReference>
<dbReference type="PROSITE" id="PS00882">
    <property type="entry name" value="NI_HGENASE_CYTB_1"/>
    <property type="match status" value="1"/>
</dbReference>
<dbReference type="PROSITE" id="PS00883">
    <property type="entry name" value="NI_HGENASE_CYTB_2"/>
    <property type="match status" value="1"/>
</dbReference>
<accession>P16145</accession>
<feature type="chain" id="PRO_0000201383" description="Probable Ni/Fe-hydrogenase B-type cytochrome subunit">
    <location>
        <begin position="1"/>
        <end position="262"/>
    </location>
</feature>
<feature type="transmembrane region" description="Helical" evidence="1">
    <location>
        <begin position="52"/>
        <end position="72"/>
    </location>
</feature>
<feature type="transmembrane region" description="Helical" evidence="1">
    <location>
        <begin position="97"/>
        <end position="117"/>
    </location>
</feature>
<feature type="transmembrane region" description="Helical" evidence="1">
    <location>
        <begin position="164"/>
        <end position="185"/>
    </location>
</feature>
<feature type="transmembrane region" description="Helical" evidence="1">
    <location>
        <begin position="218"/>
        <end position="235"/>
    </location>
</feature>
<sequence>MKGVSDERINAPVRGPDEIFEASRLTGDATREDLESIRRRTSVYVYEAPVRVWHWVNALAITILVVTGYFIASPLPSMQIGEATDQFVMGYIRFAHFAAGVVMSVAFFGRIYWAFVGNRHAWQMFYIPIFNKRYWKEFVFELRWYFFLEEEPKKYIGHNPLAHAAMFTFITLGITFMMITGWALYAEGAGQGGVTDSLFGWVLGYVQNSQRLHTLHHLGMWAIVIFAIIHIYAAVREDVMSRQSMVSTMISGHRTFKDDRIE</sequence>